<feature type="chain" id="PRO_0000385805" description="GTPase Obg">
    <location>
        <begin position="1"/>
        <end position="356"/>
    </location>
</feature>
<feature type="domain" description="Obg" evidence="2">
    <location>
        <begin position="1"/>
        <end position="158"/>
    </location>
</feature>
<feature type="domain" description="OBG-type G" evidence="1">
    <location>
        <begin position="159"/>
        <end position="339"/>
    </location>
</feature>
<feature type="binding site" evidence="1">
    <location>
        <begin position="165"/>
        <end position="172"/>
    </location>
    <ligand>
        <name>GTP</name>
        <dbReference type="ChEBI" id="CHEBI:37565"/>
    </ligand>
</feature>
<feature type="binding site" evidence="1">
    <location>
        <position position="172"/>
    </location>
    <ligand>
        <name>Mg(2+)</name>
        <dbReference type="ChEBI" id="CHEBI:18420"/>
    </ligand>
</feature>
<feature type="binding site" evidence="1">
    <location>
        <begin position="190"/>
        <end position="194"/>
    </location>
    <ligand>
        <name>GTP</name>
        <dbReference type="ChEBI" id="CHEBI:37565"/>
    </ligand>
</feature>
<feature type="binding site" evidence="1">
    <location>
        <position position="192"/>
    </location>
    <ligand>
        <name>Mg(2+)</name>
        <dbReference type="ChEBI" id="CHEBI:18420"/>
    </ligand>
</feature>
<feature type="binding site" evidence="1">
    <location>
        <begin position="212"/>
        <end position="215"/>
    </location>
    <ligand>
        <name>GTP</name>
        <dbReference type="ChEBI" id="CHEBI:37565"/>
    </ligand>
</feature>
<feature type="binding site" evidence="1">
    <location>
        <begin position="280"/>
        <end position="283"/>
    </location>
    <ligand>
        <name>GTP</name>
        <dbReference type="ChEBI" id="CHEBI:37565"/>
    </ligand>
</feature>
<feature type="binding site" evidence="1">
    <location>
        <begin position="320"/>
        <end position="322"/>
    </location>
    <ligand>
        <name>GTP</name>
        <dbReference type="ChEBI" id="CHEBI:37565"/>
    </ligand>
</feature>
<reference key="1">
    <citation type="submission" date="2006-12" db="EMBL/GenBank/DDBJ databases">
        <authorList>
            <person name="Fouts D.E."/>
            <person name="Nelson K.E."/>
            <person name="Sebastian Y."/>
        </authorList>
    </citation>
    <scope>NUCLEOTIDE SEQUENCE [LARGE SCALE GENOMIC DNA]</scope>
    <source>
        <strain>81-176</strain>
    </source>
</reference>
<evidence type="ECO:0000255" key="1">
    <source>
        <dbReference type="HAMAP-Rule" id="MF_01454"/>
    </source>
</evidence>
<evidence type="ECO:0000255" key="2">
    <source>
        <dbReference type="PROSITE-ProRule" id="PRU01231"/>
    </source>
</evidence>
<name>OBG_CAMJJ</name>
<keyword id="KW-0963">Cytoplasm</keyword>
<keyword id="KW-0342">GTP-binding</keyword>
<keyword id="KW-0378">Hydrolase</keyword>
<keyword id="KW-0460">Magnesium</keyword>
<keyword id="KW-0479">Metal-binding</keyword>
<keyword id="KW-0547">Nucleotide-binding</keyword>
<organism>
    <name type="scientific">Campylobacter jejuni subsp. jejuni serotype O:23/36 (strain 81-176)</name>
    <dbReference type="NCBI Taxonomy" id="354242"/>
    <lineage>
        <taxon>Bacteria</taxon>
        <taxon>Pseudomonadati</taxon>
        <taxon>Campylobacterota</taxon>
        <taxon>Epsilonproteobacteria</taxon>
        <taxon>Campylobacterales</taxon>
        <taxon>Campylobacteraceae</taxon>
        <taxon>Campylobacter</taxon>
    </lineage>
</organism>
<dbReference type="EC" id="3.6.5.-" evidence="1"/>
<dbReference type="EMBL" id="CP000538">
    <property type="protein sequence ID" value="EAQ71968.1"/>
    <property type="molecule type" value="Genomic_DNA"/>
</dbReference>
<dbReference type="SMR" id="A1VXH9"/>
<dbReference type="KEGG" id="cjj:CJJ81176_0131"/>
<dbReference type="eggNOG" id="COG0536">
    <property type="taxonomic scope" value="Bacteria"/>
</dbReference>
<dbReference type="HOGENOM" id="CLU_011747_2_0_7"/>
<dbReference type="Proteomes" id="UP000000646">
    <property type="component" value="Chromosome"/>
</dbReference>
<dbReference type="GO" id="GO:0005737">
    <property type="term" value="C:cytoplasm"/>
    <property type="evidence" value="ECO:0007669"/>
    <property type="project" value="UniProtKB-SubCell"/>
</dbReference>
<dbReference type="GO" id="GO:0005525">
    <property type="term" value="F:GTP binding"/>
    <property type="evidence" value="ECO:0007669"/>
    <property type="project" value="UniProtKB-UniRule"/>
</dbReference>
<dbReference type="GO" id="GO:0003924">
    <property type="term" value="F:GTPase activity"/>
    <property type="evidence" value="ECO:0007669"/>
    <property type="project" value="UniProtKB-UniRule"/>
</dbReference>
<dbReference type="GO" id="GO:0000287">
    <property type="term" value="F:magnesium ion binding"/>
    <property type="evidence" value="ECO:0007669"/>
    <property type="project" value="InterPro"/>
</dbReference>
<dbReference type="GO" id="GO:0042254">
    <property type="term" value="P:ribosome biogenesis"/>
    <property type="evidence" value="ECO:0007669"/>
    <property type="project" value="UniProtKB-UniRule"/>
</dbReference>
<dbReference type="CDD" id="cd01898">
    <property type="entry name" value="Obg"/>
    <property type="match status" value="1"/>
</dbReference>
<dbReference type="FunFam" id="2.70.210.12:FF:000001">
    <property type="entry name" value="GTPase Obg"/>
    <property type="match status" value="1"/>
</dbReference>
<dbReference type="Gene3D" id="2.70.210.12">
    <property type="entry name" value="GTP1/OBG domain"/>
    <property type="match status" value="1"/>
</dbReference>
<dbReference type="Gene3D" id="3.40.50.300">
    <property type="entry name" value="P-loop containing nucleotide triphosphate hydrolases"/>
    <property type="match status" value="1"/>
</dbReference>
<dbReference type="HAMAP" id="MF_01454">
    <property type="entry name" value="GTPase_Obg"/>
    <property type="match status" value="1"/>
</dbReference>
<dbReference type="InterPro" id="IPR031167">
    <property type="entry name" value="G_OBG"/>
</dbReference>
<dbReference type="InterPro" id="IPR006073">
    <property type="entry name" value="GTP-bd"/>
</dbReference>
<dbReference type="InterPro" id="IPR014100">
    <property type="entry name" value="GTP-bd_Obg/CgtA"/>
</dbReference>
<dbReference type="InterPro" id="IPR006074">
    <property type="entry name" value="GTP1-OBG_CS"/>
</dbReference>
<dbReference type="InterPro" id="IPR006169">
    <property type="entry name" value="GTP1_OBG_dom"/>
</dbReference>
<dbReference type="InterPro" id="IPR036726">
    <property type="entry name" value="GTP1_OBG_dom_sf"/>
</dbReference>
<dbReference type="InterPro" id="IPR045086">
    <property type="entry name" value="OBG_GTPase"/>
</dbReference>
<dbReference type="InterPro" id="IPR027417">
    <property type="entry name" value="P-loop_NTPase"/>
</dbReference>
<dbReference type="NCBIfam" id="TIGR02729">
    <property type="entry name" value="Obg_CgtA"/>
    <property type="match status" value="1"/>
</dbReference>
<dbReference type="NCBIfam" id="NF008955">
    <property type="entry name" value="PRK12297.1"/>
    <property type="match status" value="1"/>
</dbReference>
<dbReference type="NCBIfam" id="NF008956">
    <property type="entry name" value="PRK12299.1"/>
    <property type="match status" value="1"/>
</dbReference>
<dbReference type="PANTHER" id="PTHR11702">
    <property type="entry name" value="DEVELOPMENTALLY REGULATED GTP-BINDING PROTEIN-RELATED"/>
    <property type="match status" value="1"/>
</dbReference>
<dbReference type="PANTHER" id="PTHR11702:SF31">
    <property type="entry name" value="MITOCHONDRIAL RIBOSOME-ASSOCIATED GTPASE 2"/>
    <property type="match status" value="1"/>
</dbReference>
<dbReference type="Pfam" id="PF01018">
    <property type="entry name" value="GTP1_OBG"/>
    <property type="match status" value="1"/>
</dbReference>
<dbReference type="Pfam" id="PF01926">
    <property type="entry name" value="MMR_HSR1"/>
    <property type="match status" value="1"/>
</dbReference>
<dbReference type="PIRSF" id="PIRSF002401">
    <property type="entry name" value="GTP_bd_Obg/CgtA"/>
    <property type="match status" value="1"/>
</dbReference>
<dbReference type="PRINTS" id="PR00326">
    <property type="entry name" value="GTP1OBG"/>
</dbReference>
<dbReference type="SUPFAM" id="SSF82051">
    <property type="entry name" value="Obg GTP-binding protein N-terminal domain"/>
    <property type="match status" value="1"/>
</dbReference>
<dbReference type="SUPFAM" id="SSF52540">
    <property type="entry name" value="P-loop containing nucleoside triphosphate hydrolases"/>
    <property type="match status" value="1"/>
</dbReference>
<dbReference type="PROSITE" id="PS51710">
    <property type="entry name" value="G_OBG"/>
    <property type="match status" value="1"/>
</dbReference>
<dbReference type="PROSITE" id="PS00905">
    <property type="entry name" value="GTP1_OBG"/>
    <property type="match status" value="1"/>
</dbReference>
<dbReference type="PROSITE" id="PS51883">
    <property type="entry name" value="OBG"/>
    <property type="match status" value="1"/>
</dbReference>
<gene>
    <name evidence="1" type="primary">obg</name>
    <name type="ordered locus">CJJ81176_0131</name>
</gene>
<accession>A1VXH9</accession>
<proteinExistence type="inferred from homology"/>
<comment type="function">
    <text evidence="1">An essential GTPase which binds GTP, GDP and possibly (p)ppGpp with moderate affinity, with high nucleotide exchange rates and a fairly low GTP hydrolysis rate. Plays a role in control of the cell cycle, stress response, ribosome biogenesis and in those bacteria that undergo differentiation, in morphogenesis control.</text>
</comment>
<comment type="cofactor">
    <cofactor evidence="1">
        <name>Mg(2+)</name>
        <dbReference type="ChEBI" id="CHEBI:18420"/>
    </cofactor>
</comment>
<comment type="subunit">
    <text evidence="1">Monomer.</text>
</comment>
<comment type="subcellular location">
    <subcellularLocation>
        <location evidence="1">Cytoplasm</location>
    </subcellularLocation>
</comment>
<comment type="similarity">
    <text evidence="1">Belongs to the TRAFAC class OBG-HflX-like GTPase superfamily. OBG GTPase family.</text>
</comment>
<sequence length="356" mass="39066">MFIDSVKITLASGDGGKGAVSFRREKHVPLGGPDGGDGGNGGDIIFVCDNNTHTLVNFKGKRELRAQNGAGGMGRNKNGKKGENLELIVPEGTQVIDAQTNEILLDLTEEGQRELFLKGGKGGLGNTHFKHATNQRPDYAQPGIKGESRLVRLELKLIADVGLVGFPNVGKSTLISVVSNAKPEIANYEFTTLTPKLGLVDVNEYNSFVMADIPGIIEGASGGKGLGLAFLKHIERTSFLLFVLDPMRQMPLKEQFIVLRKELEKFSNELFGRKFGIMISKSDSVRLGEEFAEQIALNINELDNYLKEINNPQSFLIKVSSLEKTGLKELKFMLLEEIKTLRNNKKNFNNLGSVLY</sequence>
<protein>
    <recommendedName>
        <fullName evidence="1">GTPase Obg</fullName>
        <ecNumber evidence="1">3.6.5.-</ecNumber>
    </recommendedName>
    <alternativeName>
        <fullName evidence="1">GTP-binding protein Obg</fullName>
    </alternativeName>
</protein>